<organism>
    <name type="scientific">Haloarcula marismortui (strain ATCC 43049 / DSM 3752 / JCM 8966 / VKM B-1809)</name>
    <name type="common">Halobacterium marismortui</name>
    <dbReference type="NCBI Taxonomy" id="272569"/>
    <lineage>
        <taxon>Archaea</taxon>
        <taxon>Methanobacteriati</taxon>
        <taxon>Methanobacteriota</taxon>
        <taxon>Stenosarchaea group</taxon>
        <taxon>Halobacteria</taxon>
        <taxon>Halobacteriales</taxon>
        <taxon>Haloarculaceae</taxon>
        <taxon>Haloarcula</taxon>
    </lineage>
</organism>
<feature type="initiator methionine" description="Removed" evidence="3">
    <location>
        <position position="1"/>
    </location>
</feature>
<feature type="chain" id="PRO_0000153791" description="Large ribosomal subunit protein eL31">
    <location>
        <begin position="2"/>
        <end position="92"/>
    </location>
</feature>
<feature type="modified residue" description="N-acetylserine" evidence="3">
    <location>
        <position position="2"/>
    </location>
</feature>
<feature type="strand" evidence="5">
    <location>
        <begin position="9"/>
        <end position="14"/>
    </location>
</feature>
<feature type="helix" evidence="5">
    <location>
        <begin position="16"/>
        <end position="20"/>
    </location>
</feature>
<feature type="helix" evidence="5">
    <location>
        <begin position="23"/>
        <end position="25"/>
    </location>
</feature>
<feature type="helix" evidence="5">
    <location>
        <begin position="26"/>
        <end position="41"/>
    </location>
</feature>
<feature type="helix" evidence="5">
    <location>
        <begin position="46"/>
        <end position="48"/>
    </location>
</feature>
<feature type="strand" evidence="5">
    <location>
        <begin position="49"/>
        <end position="51"/>
    </location>
</feature>
<feature type="helix" evidence="5">
    <location>
        <begin position="53"/>
        <end position="59"/>
    </location>
</feature>
<feature type="turn" evidence="5">
    <location>
        <begin position="60"/>
        <end position="62"/>
    </location>
</feature>
<feature type="turn" evidence="6">
    <location>
        <begin position="63"/>
        <end position="65"/>
    </location>
</feature>
<feature type="strand" evidence="5">
    <location>
        <begin position="69"/>
        <end position="78"/>
    </location>
</feature>
<feature type="turn" evidence="5">
    <location>
        <begin position="79"/>
        <end position="82"/>
    </location>
</feature>
<feature type="strand" evidence="5">
    <location>
        <begin position="83"/>
        <end position="87"/>
    </location>
</feature>
<comment type="function">
    <text>Binds to the 23S rRNA. Located at the polypeptide exit tunnel on the outside of the subunit.</text>
</comment>
<comment type="subunit">
    <text evidence="1 2">Part of the 50S ribosomal subunit.</text>
</comment>
<comment type="similarity">
    <text evidence="4">Belongs to the eukaryotic ribosomal protein eL31 family.</text>
</comment>
<protein>
    <recommendedName>
        <fullName evidence="4">Large ribosomal subunit protein eL31</fullName>
    </recommendedName>
    <alternativeName>
        <fullName>50S ribosomal protein L31e</fullName>
    </alternativeName>
    <alternativeName>
        <fullName>Hl30</fullName>
    </alternativeName>
    <alternativeName>
        <fullName>L34</fullName>
    </alternativeName>
</protein>
<gene>
    <name type="primary">rpl31e</name>
    <name type="ordered locus">rrnAC3113</name>
</gene>
<name>RL31_HALMA</name>
<evidence type="ECO:0000269" key="1">
    <source>
    </source>
</evidence>
<evidence type="ECO:0000269" key="2">
    <source>
    </source>
</evidence>
<evidence type="ECO:0000269" key="3">
    <source>
    </source>
</evidence>
<evidence type="ECO:0000305" key="4"/>
<evidence type="ECO:0007829" key="5">
    <source>
        <dbReference type="PDB" id="1VQ8"/>
    </source>
</evidence>
<evidence type="ECO:0007829" key="6">
    <source>
        <dbReference type="PDB" id="1VQM"/>
    </source>
</evidence>
<proteinExistence type="evidence at protein level"/>
<reference key="1">
    <citation type="journal article" date="1990" name="Biochim. Biophys. Acta">
        <title>Evidence for an additional archaebacterial gene cluster in Halobacterium marismortui encoding ribosomal proteins HL46e and HL30.</title>
        <authorList>
            <person name="Bergmann U."/>
            <person name="Arndt E."/>
        </authorList>
    </citation>
    <scope>NUCLEOTIDE SEQUENCE [GENOMIC DNA]</scope>
</reference>
<reference key="2">
    <citation type="journal article" date="2004" name="Genome Res.">
        <title>Genome sequence of Haloarcula marismortui: a halophilic archaeon from the Dead Sea.</title>
        <authorList>
            <person name="Baliga N.S."/>
            <person name="Bonneau R."/>
            <person name="Facciotti M.T."/>
            <person name="Pan M."/>
            <person name="Glusman G."/>
            <person name="Deutsch E.W."/>
            <person name="Shannon P."/>
            <person name="Chiu Y."/>
            <person name="Weng R.S."/>
            <person name="Gan R.R."/>
            <person name="Hung P."/>
            <person name="Date S.V."/>
            <person name="Marcotte E."/>
            <person name="Hood L."/>
            <person name="Ng W.V."/>
        </authorList>
    </citation>
    <scope>NUCLEOTIDE SEQUENCE [LARGE SCALE GENOMIC DNA]</scope>
    <source>
        <strain>ATCC 43049 / DSM 3752 / JCM 8966 / VKM B-1809</strain>
    </source>
</reference>
<reference key="3">
    <citation type="journal article" date="1990" name="Biochim. Biophys. Acta">
        <title>Amino acid sequences of the ribosomal proteins HL30 and HmaL5 from the archaebacterium Halobacterium marismortui.</title>
        <authorList>
            <person name="Hatakeyama T."/>
            <person name="Hatakeyama T."/>
        </authorList>
    </citation>
    <scope>PROTEIN SEQUENCE OF 2-92</scope>
    <scope>ACETYLATION AT SER-2</scope>
</reference>
<reference key="4">
    <citation type="journal article" date="2000" name="Science">
        <title>The complete atomic structure of the large ribosomal subunit at 2.4 A resolution.</title>
        <authorList>
            <person name="Ban N."/>
            <person name="Nissen P."/>
            <person name="Hansen J."/>
            <person name="Moore P.B."/>
            <person name="Steitz T.A."/>
        </authorList>
    </citation>
    <scope>X-RAY CRYSTALLOGRAPHY (2.4 ANGSTROMS) OF THE 50S SUBUNIT</scope>
    <source>
        <strain>ATCC 43049 / DSM 3752 / JCM 8966 / VKM B-1809</strain>
    </source>
</reference>
<reference key="5">
    <citation type="journal article" date="2000" name="Science">
        <title>The structural basis of ribosome activity in peptide bond synthesis.</title>
        <authorList>
            <person name="Nissen P."/>
            <person name="Hansen J."/>
            <person name="Ban N."/>
            <person name="Moore P.B."/>
            <person name="Steitz T.A."/>
        </authorList>
    </citation>
    <scope>X-RAY CRYSTALLOGRAPHY (3.0 ANGSTROMS) OF THE 50S SUBUNIT</scope>
    <source>
        <strain>ATCC 43049 / DSM 3752 / JCM 8966 / VKM B-1809</strain>
    </source>
</reference>
<reference key="6">
    <citation type="journal article" date="2002" name="Nat. Struct. Biol.">
        <title>A pre-translocational intermediate in protein synthesis observed in crystals of enzymatically active 50S subunits.</title>
        <authorList>
            <person name="Schmeing T.M."/>
            <person name="Seila A.C."/>
            <person name="Hansen J.L."/>
            <person name="Freeborn B."/>
            <person name="Soukup J.K."/>
            <person name="Scaringe S.A."/>
            <person name="Strobel S.A."/>
            <person name="Moore P.B."/>
            <person name="Steitz T.A."/>
        </authorList>
    </citation>
    <scope>X-RAY CRYSTALLOGRAPHY (3.1 ANGSTROMS) OF THE 50S SUBUNIT</scope>
    <source>
        <strain>ATCC 43049 / DSM 3752 / JCM 8966 / VKM B-1809</strain>
    </source>
</reference>
<reference key="7">
    <citation type="journal article" date="2001" name="EMBO J.">
        <title>The kink-turn: a new RNA secondary structure motif.</title>
        <authorList>
            <person name="Klein D.J."/>
            <person name="Schmeing T.M."/>
            <person name="Moore P.B."/>
            <person name="Steitz T.A."/>
        </authorList>
    </citation>
    <scope>X-RAY CRYSTALLOGRAPHY (2.4 ANGSTROMS) OF THE 50S SUBUNIT</scope>
    <source>
        <strain>ATCC 43049 / DSM 3752 / JCM 8966 / VKM B-1809</strain>
    </source>
</reference>
<reference key="8">
    <citation type="journal article" date="2002" name="Mol. Cell">
        <title>The structures of four macrolide antibiotics bound to the large ribosomal subunit.</title>
        <authorList>
            <person name="Hansen J.L."/>
            <person name="Ippolito J.A."/>
            <person name="Ban N."/>
            <person name="Nissen P."/>
            <person name="Moore P.B."/>
            <person name="Steitz T.A."/>
        </authorList>
    </citation>
    <scope>X-RAY CRYSTALLOGRAPHY (3.0 ANGSTROMS) OF THE 50S SUBUNIT IN COMPLEX WITH FOUR MACROLIDE ANTIBIOTICS</scope>
    <source>
        <strain>ATCC 43049 / DSM 3752 / JCM 8966 / VKM B-1809</strain>
    </source>
</reference>
<reference key="9">
    <citation type="journal article" date="2002" name="Proc. Natl. Acad. Sci. U.S.A.">
        <title>Structural insights into peptide bond formation.</title>
        <authorList>
            <person name="Hansen J.L."/>
            <person name="Schmeing T.M."/>
            <person name="Moore P.B."/>
            <person name="Steitz T.A."/>
        </authorList>
    </citation>
    <scope>X-RAY CRYSTALLOGRAPHY (2.8 ANGSTROMS) OF THE 50S SUBUNIT</scope>
    <source>
        <strain>ATCC 43049 / DSM 3752 / JCM 8966 / VKM B-1809</strain>
    </source>
</reference>
<reference key="10">
    <citation type="journal article" date="2003" name="J. Mol. Biol.">
        <title>Structures of five antibiotics bound at the peptidyl transferase center of the large ribosomal subunit.</title>
        <authorList>
            <person name="Hansen J.L."/>
            <person name="Moore P.B."/>
            <person name="Steitz T.A."/>
        </authorList>
    </citation>
    <scope>X-RAY CRYSTALLOGRAPHY (3.0 ANGSTROMS) OF THE 50S SUBUNIT IN COMPLEX WITH FIVE ANTIBIOTICS AT THE PEPTIDYL TRANSFERASE CENTER</scope>
    <source>
        <strain>ATCC 43049 / DSM 3752 / JCM 8966 / VKM B-1809</strain>
    </source>
</reference>
<reference key="11">
    <citation type="journal article" date="2003" name="RNA">
        <title>Structures of deacylated tRNA mimics bound to the E site of the large ribosomal subunit.</title>
        <authorList>
            <person name="Schmeing T.M."/>
            <person name="Moore P.B."/>
            <person name="Steitz T.A."/>
        </authorList>
    </citation>
    <scope>X-RAY CRYSTALLOGRAPHY (2.9 ANGSTROMS) OF THE 50S SUBUNIT WITH TWO DIFFERENT E SITE SUBSTRATES</scope>
</reference>
<reference key="12">
    <citation type="journal article" date="2013" name="Acta Crystallogr. D">
        <title>Revisiting the Haloarcula marismortui 50S ribosomal subunit model.</title>
        <authorList>
            <person name="Gabdulkhakov A."/>
            <person name="Nikonov S."/>
            <person name="Garber M."/>
        </authorList>
    </citation>
    <scope>X-RAY CRYSTALLOGRAPHY (2.4 ANGSTROMS) OF THE 50S SUBUNIT</scope>
</reference>
<sequence length="92" mass="10367">MSASDFEERVVTIPLRDARAEPNHKRADKAMILIREHLAKHFSVDEDAVRLDPSINEAAWARGRANTPSKIRVRAARFEEEGEAIVEAETAE</sequence>
<keyword id="KW-0002">3D-structure</keyword>
<keyword id="KW-0007">Acetylation</keyword>
<keyword id="KW-0903">Direct protein sequencing</keyword>
<keyword id="KW-1185">Reference proteome</keyword>
<keyword id="KW-0687">Ribonucleoprotein</keyword>
<keyword id="KW-0689">Ribosomal protein</keyword>
<keyword id="KW-0694">RNA-binding</keyword>
<keyword id="KW-0699">rRNA-binding</keyword>
<accession>P18138</accession>
<accession>Q5UY29</accession>
<dbReference type="EMBL" id="X55007">
    <property type="protein sequence ID" value="CAA38751.1"/>
    <property type="molecule type" value="Genomic_DNA"/>
</dbReference>
<dbReference type="EMBL" id="AY596297">
    <property type="protein sequence ID" value="AAV47824.1"/>
    <property type="molecule type" value="Genomic_DNA"/>
</dbReference>
<dbReference type="PIR" id="S13067">
    <property type="entry name" value="R5HSER"/>
</dbReference>
<dbReference type="RefSeq" id="WP_004964660.1">
    <property type="nucleotide sequence ID" value="NZ_CP039138.1"/>
</dbReference>
<dbReference type="PDB" id="1FFK">
    <property type="method" value="X-ray"/>
    <property type="resolution" value="2.40 A"/>
    <property type="chains" value="U=2-92"/>
</dbReference>
<dbReference type="PDB" id="1JJ2">
    <property type="method" value="X-ray"/>
    <property type="resolution" value="2.40 A"/>
    <property type="chains" value="W=2-92"/>
</dbReference>
<dbReference type="PDB" id="1K73">
    <property type="method" value="X-ray"/>
    <property type="resolution" value="3.01 A"/>
    <property type="chains" value="Y=2-92"/>
</dbReference>
<dbReference type="PDB" id="1K8A">
    <property type="method" value="X-ray"/>
    <property type="resolution" value="3.00 A"/>
    <property type="chains" value="Y=2-92"/>
</dbReference>
<dbReference type="PDB" id="1K9M">
    <property type="method" value="X-ray"/>
    <property type="resolution" value="3.00 A"/>
    <property type="chains" value="Y=2-92"/>
</dbReference>
<dbReference type="PDB" id="1KC8">
    <property type="method" value="X-ray"/>
    <property type="resolution" value="3.01 A"/>
    <property type="chains" value="Y=2-92"/>
</dbReference>
<dbReference type="PDB" id="1KD1">
    <property type="method" value="X-ray"/>
    <property type="resolution" value="3.00 A"/>
    <property type="chains" value="Y=2-92"/>
</dbReference>
<dbReference type="PDB" id="1KQS">
    <property type="method" value="X-ray"/>
    <property type="resolution" value="3.10 A"/>
    <property type="chains" value="W=2-92"/>
</dbReference>
<dbReference type="PDB" id="1M1K">
    <property type="method" value="X-ray"/>
    <property type="resolution" value="3.20 A"/>
    <property type="chains" value="Y=2-92"/>
</dbReference>
<dbReference type="PDB" id="1M90">
    <property type="method" value="X-ray"/>
    <property type="resolution" value="2.80 A"/>
    <property type="chains" value="Y=2-92"/>
</dbReference>
<dbReference type="PDB" id="1N8R">
    <property type="method" value="X-ray"/>
    <property type="resolution" value="3.00 A"/>
    <property type="chains" value="Y=2-92"/>
</dbReference>
<dbReference type="PDB" id="1NJI">
    <property type="method" value="X-ray"/>
    <property type="resolution" value="3.00 A"/>
    <property type="chains" value="Y=2-92"/>
</dbReference>
<dbReference type="PDB" id="1Q7Y">
    <property type="method" value="X-ray"/>
    <property type="resolution" value="3.20 A"/>
    <property type="chains" value="Y=2-92"/>
</dbReference>
<dbReference type="PDB" id="1Q81">
    <property type="method" value="X-ray"/>
    <property type="resolution" value="2.95 A"/>
    <property type="chains" value="Y=2-92"/>
</dbReference>
<dbReference type="PDB" id="1Q82">
    <property type="method" value="X-ray"/>
    <property type="resolution" value="2.98 A"/>
    <property type="chains" value="Y=2-92"/>
</dbReference>
<dbReference type="PDB" id="1Q86">
    <property type="method" value="X-ray"/>
    <property type="resolution" value="3.00 A"/>
    <property type="chains" value="Y=2-92"/>
</dbReference>
<dbReference type="PDB" id="1QVF">
    <property type="method" value="X-ray"/>
    <property type="resolution" value="3.10 A"/>
    <property type="chains" value="W=2-92"/>
</dbReference>
<dbReference type="PDB" id="1QVG">
    <property type="method" value="X-ray"/>
    <property type="resolution" value="2.90 A"/>
    <property type="chains" value="W=2-92"/>
</dbReference>
<dbReference type="PDB" id="1S72">
    <property type="method" value="X-ray"/>
    <property type="resolution" value="2.40 A"/>
    <property type="chains" value="X=1-92"/>
</dbReference>
<dbReference type="PDB" id="1VQ4">
    <property type="method" value="X-ray"/>
    <property type="resolution" value="2.70 A"/>
    <property type="chains" value="X=1-92"/>
</dbReference>
<dbReference type="PDB" id="1VQ5">
    <property type="method" value="X-ray"/>
    <property type="resolution" value="2.60 A"/>
    <property type="chains" value="X=1-92"/>
</dbReference>
<dbReference type="PDB" id="1VQ6">
    <property type="method" value="X-ray"/>
    <property type="resolution" value="2.70 A"/>
    <property type="chains" value="X=1-92"/>
</dbReference>
<dbReference type="PDB" id="1VQ7">
    <property type="method" value="X-ray"/>
    <property type="resolution" value="2.50 A"/>
    <property type="chains" value="X=1-92"/>
</dbReference>
<dbReference type="PDB" id="1VQ8">
    <property type="method" value="X-ray"/>
    <property type="resolution" value="2.20 A"/>
    <property type="chains" value="X=1-92"/>
</dbReference>
<dbReference type="PDB" id="1VQ9">
    <property type="method" value="X-ray"/>
    <property type="resolution" value="2.40 A"/>
    <property type="chains" value="X=1-92"/>
</dbReference>
<dbReference type="PDB" id="1VQK">
    <property type="method" value="X-ray"/>
    <property type="resolution" value="2.30 A"/>
    <property type="chains" value="X=1-92"/>
</dbReference>
<dbReference type="PDB" id="1VQL">
    <property type="method" value="X-ray"/>
    <property type="resolution" value="2.30 A"/>
    <property type="chains" value="X=1-92"/>
</dbReference>
<dbReference type="PDB" id="1VQM">
    <property type="method" value="X-ray"/>
    <property type="resolution" value="2.30 A"/>
    <property type="chains" value="X=1-92"/>
</dbReference>
<dbReference type="PDB" id="1VQN">
    <property type="method" value="X-ray"/>
    <property type="resolution" value="2.40 A"/>
    <property type="chains" value="X=1-92"/>
</dbReference>
<dbReference type="PDB" id="1VQO">
    <property type="method" value="X-ray"/>
    <property type="resolution" value="2.20 A"/>
    <property type="chains" value="X=1-92"/>
</dbReference>
<dbReference type="PDB" id="1VQP">
    <property type="method" value="X-ray"/>
    <property type="resolution" value="2.25 A"/>
    <property type="chains" value="X=1-92"/>
</dbReference>
<dbReference type="PDB" id="1W2B">
    <property type="method" value="X-ray"/>
    <property type="resolution" value="3.50 A"/>
    <property type="chains" value="W=2-92"/>
</dbReference>
<dbReference type="PDB" id="1YHQ">
    <property type="method" value="X-ray"/>
    <property type="resolution" value="2.40 A"/>
    <property type="chains" value="X=1-92"/>
</dbReference>
<dbReference type="PDB" id="1YI2">
    <property type="method" value="X-ray"/>
    <property type="resolution" value="2.65 A"/>
    <property type="chains" value="X=1-92"/>
</dbReference>
<dbReference type="PDB" id="1YIJ">
    <property type="method" value="X-ray"/>
    <property type="resolution" value="2.60 A"/>
    <property type="chains" value="X=1-92"/>
</dbReference>
<dbReference type="PDB" id="1YIT">
    <property type="method" value="X-ray"/>
    <property type="resolution" value="2.80 A"/>
    <property type="chains" value="X=1-92"/>
</dbReference>
<dbReference type="PDB" id="1YJ9">
    <property type="method" value="X-ray"/>
    <property type="resolution" value="2.90 A"/>
    <property type="chains" value="X=1-92"/>
</dbReference>
<dbReference type="PDB" id="1YJN">
    <property type="method" value="X-ray"/>
    <property type="resolution" value="3.00 A"/>
    <property type="chains" value="X=1-92"/>
</dbReference>
<dbReference type="PDB" id="1YJW">
    <property type="method" value="X-ray"/>
    <property type="resolution" value="2.90 A"/>
    <property type="chains" value="X=1-92"/>
</dbReference>
<dbReference type="PDB" id="2OTJ">
    <property type="method" value="X-ray"/>
    <property type="resolution" value="2.90 A"/>
    <property type="chains" value="X=1-92"/>
</dbReference>
<dbReference type="PDB" id="2OTL">
    <property type="method" value="X-ray"/>
    <property type="resolution" value="2.70 A"/>
    <property type="chains" value="X=1-92"/>
</dbReference>
<dbReference type="PDB" id="2QA4">
    <property type="method" value="X-ray"/>
    <property type="resolution" value="3.00 A"/>
    <property type="chains" value="X=1-92"/>
</dbReference>
<dbReference type="PDB" id="2QEX">
    <property type="method" value="X-ray"/>
    <property type="resolution" value="2.90 A"/>
    <property type="chains" value="X=1-92"/>
</dbReference>
<dbReference type="PDB" id="3CC2">
    <property type="method" value="X-ray"/>
    <property type="resolution" value="2.40 A"/>
    <property type="chains" value="X=1-92"/>
</dbReference>
<dbReference type="PDB" id="3CC4">
    <property type="method" value="X-ray"/>
    <property type="resolution" value="2.70 A"/>
    <property type="chains" value="X=1-92"/>
</dbReference>
<dbReference type="PDB" id="3CC7">
    <property type="method" value="X-ray"/>
    <property type="resolution" value="2.70 A"/>
    <property type="chains" value="X=1-92"/>
</dbReference>
<dbReference type="PDB" id="3CCE">
    <property type="method" value="X-ray"/>
    <property type="resolution" value="2.75 A"/>
    <property type="chains" value="X=1-92"/>
</dbReference>
<dbReference type="PDB" id="3CCJ">
    <property type="method" value="X-ray"/>
    <property type="resolution" value="2.70 A"/>
    <property type="chains" value="X=1-92"/>
</dbReference>
<dbReference type="PDB" id="3CCL">
    <property type="method" value="X-ray"/>
    <property type="resolution" value="2.90 A"/>
    <property type="chains" value="X=1-92"/>
</dbReference>
<dbReference type="PDB" id="3CCM">
    <property type="method" value="X-ray"/>
    <property type="resolution" value="2.55 A"/>
    <property type="chains" value="X=1-92"/>
</dbReference>
<dbReference type="PDB" id="3CCQ">
    <property type="method" value="X-ray"/>
    <property type="resolution" value="2.90 A"/>
    <property type="chains" value="X=1-92"/>
</dbReference>
<dbReference type="PDB" id="3CCR">
    <property type="method" value="X-ray"/>
    <property type="resolution" value="3.00 A"/>
    <property type="chains" value="X=1-92"/>
</dbReference>
<dbReference type="PDB" id="3CCS">
    <property type="method" value="X-ray"/>
    <property type="resolution" value="2.95 A"/>
    <property type="chains" value="X=1-92"/>
</dbReference>
<dbReference type="PDB" id="3CCU">
    <property type="method" value="X-ray"/>
    <property type="resolution" value="2.80 A"/>
    <property type="chains" value="X=1-92"/>
</dbReference>
<dbReference type="PDB" id="3CCV">
    <property type="method" value="X-ray"/>
    <property type="resolution" value="2.90 A"/>
    <property type="chains" value="X=1-92"/>
</dbReference>
<dbReference type="PDB" id="3CD6">
    <property type="method" value="X-ray"/>
    <property type="resolution" value="2.75 A"/>
    <property type="chains" value="X=1-92"/>
</dbReference>
<dbReference type="PDB" id="3CMA">
    <property type="method" value="X-ray"/>
    <property type="resolution" value="2.80 A"/>
    <property type="chains" value="X=1-92"/>
</dbReference>
<dbReference type="PDB" id="3CME">
    <property type="method" value="X-ray"/>
    <property type="resolution" value="2.95 A"/>
    <property type="chains" value="X=1-92"/>
</dbReference>
<dbReference type="PDB" id="3CPW">
    <property type="method" value="X-ray"/>
    <property type="resolution" value="2.70 A"/>
    <property type="chains" value="W=1-92"/>
</dbReference>
<dbReference type="PDB" id="3CXC">
    <property type="method" value="X-ray"/>
    <property type="resolution" value="3.00 A"/>
    <property type="chains" value="W=2-92"/>
</dbReference>
<dbReference type="PDB" id="3G4S">
    <property type="method" value="X-ray"/>
    <property type="resolution" value="3.20 A"/>
    <property type="chains" value="X=8-89"/>
</dbReference>
<dbReference type="PDB" id="3G6E">
    <property type="method" value="X-ray"/>
    <property type="resolution" value="2.70 A"/>
    <property type="chains" value="X=8-89"/>
</dbReference>
<dbReference type="PDB" id="3G71">
    <property type="method" value="X-ray"/>
    <property type="resolution" value="2.85 A"/>
    <property type="chains" value="X=8-89"/>
</dbReference>
<dbReference type="PDB" id="3I55">
    <property type="method" value="X-ray"/>
    <property type="resolution" value="3.11 A"/>
    <property type="chains" value="X=1-92"/>
</dbReference>
<dbReference type="PDB" id="3I56">
    <property type="method" value="X-ray"/>
    <property type="resolution" value="2.90 A"/>
    <property type="chains" value="X=1-92"/>
</dbReference>
<dbReference type="PDB" id="3OW2">
    <property type="method" value="X-ray"/>
    <property type="resolution" value="2.70 A"/>
    <property type="chains" value="W=8-89"/>
</dbReference>
<dbReference type="PDB" id="4ADX">
    <property type="method" value="EM"/>
    <property type="resolution" value="6.60 A"/>
    <property type="chains" value="X=1-92"/>
</dbReference>
<dbReference type="PDB" id="4V9F">
    <property type="method" value="X-ray"/>
    <property type="resolution" value="2.40 A"/>
    <property type="chains" value="X=1-92"/>
</dbReference>
<dbReference type="PDBsum" id="1FFK"/>
<dbReference type="PDBsum" id="1JJ2"/>
<dbReference type="PDBsum" id="1K73"/>
<dbReference type="PDBsum" id="1K8A"/>
<dbReference type="PDBsum" id="1K9M"/>
<dbReference type="PDBsum" id="1KC8"/>
<dbReference type="PDBsum" id="1KD1"/>
<dbReference type="PDBsum" id="1KQS"/>
<dbReference type="PDBsum" id="1M1K"/>
<dbReference type="PDBsum" id="1M90"/>
<dbReference type="PDBsum" id="1N8R"/>
<dbReference type="PDBsum" id="1NJI"/>
<dbReference type="PDBsum" id="1Q7Y"/>
<dbReference type="PDBsum" id="1Q81"/>
<dbReference type="PDBsum" id="1Q82"/>
<dbReference type="PDBsum" id="1Q86"/>
<dbReference type="PDBsum" id="1QVF"/>
<dbReference type="PDBsum" id="1QVG"/>
<dbReference type="PDBsum" id="1S72"/>
<dbReference type="PDBsum" id="1VQ4"/>
<dbReference type="PDBsum" id="1VQ5"/>
<dbReference type="PDBsum" id="1VQ6"/>
<dbReference type="PDBsum" id="1VQ7"/>
<dbReference type="PDBsum" id="1VQ8"/>
<dbReference type="PDBsum" id="1VQ9"/>
<dbReference type="PDBsum" id="1VQK"/>
<dbReference type="PDBsum" id="1VQL"/>
<dbReference type="PDBsum" id="1VQM"/>
<dbReference type="PDBsum" id="1VQN"/>
<dbReference type="PDBsum" id="1VQO"/>
<dbReference type="PDBsum" id="1VQP"/>
<dbReference type="PDBsum" id="1W2B"/>
<dbReference type="PDBsum" id="1YHQ"/>
<dbReference type="PDBsum" id="1YI2"/>
<dbReference type="PDBsum" id="1YIJ"/>
<dbReference type="PDBsum" id="1YIT"/>
<dbReference type="PDBsum" id="1YJ9"/>
<dbReference type="PDBsum" id="1YJN"/>
<dbReference type="PDBsum" id="1YJW"/>
<dbReference type="PDBsum" id="2OTJ"/>
<dbReference type="PDBsum" id="2OTL"/>
<dbReference type="PDBsum" id="2QA4"/>
<dbReference type="PDBsum" id="2QEX"/>
<dbReference type="PDBsum" id="3CC2"/>
<dbReference type="PDBsum" id="3CC4"/>
<dbReference type="PDBsum" id="3CC7"/>
<dbReference type="PDBsum" id="3CCE"/>
<dbReference type="PDBsum" id="3CCJ"/>
<dbReference type="PDBsum" id="3CCL"/>
<dbReference type="PDBsum" id="3CCM"/>
<dbReference type="PDBsum" id="3CCQ"/>
<dbReference type="PDBsum" id="3CCR"/>
<dbReference type="PDBsum" id="3CCS"/>
<dbReference type="PDBsum" id="3CCU"/>
<dbReference type="PDBsum" id="3CCV"/>
<dbReference type="PDBsum" id="3CD6"/>
<dbReference type="PDBsum" id="3CMA"/>
<dbReference type="PDBsum" id="3CME"/>
<dbReference type="PDBsum" id="3CPW"/>
<dbReference type="PDBsum" id="3CXC"/>
<dbReference type="PDBsum" id="3G4S"/>
<dbReference type="PDBsum" id="3G6E"/>
<dbReference type="PDBsum" id="3G71"/>
<dbReference type="PDBsum" id="3I55"/>
<dbReference type="PDBsum" id="3I56"/>
<dbReference type="PDBsum" id="3OW2"/>
<dbReference type="PDBsum" id="4ADX"/>
<dbReference type="PDBsum" id="4V9F"/>
<dbReference type="SMR" id="P18138"/>
<dbReference type="IntAct" id="P18138">
    <property type="interactions" value="2"/>
</dbReference>
<dbReference type="STRING" id="272569.rrnAC3113"/>
<dbReference type="iPTMnet" id="P18138"/>
<dbReference type="PaxDb" id="272569-rrnAC3113"/>
<dbReference type="EnsemblBacteria" id="AAV47824">
    <property type="protein sequence ID" value="AAV47824"/>
    <property type="gene ID" value="rrnAC3113"/>
</dbReference>
<dbReference type="KEGG" id="hma:rrnAC3113"/>
<dbReference type="PATRIC" id="fig|272569.17.peg.3655"/>
<dbReference type="eggNOG" id="arCOG04473">
    <property type="taxonomic scope" value="Archaea"/>
</dbReference>
<dbReference type="HOGENOM" id="CLU_112570_3_2_2"/>
<dbReference type="EvolutionaryTrace" id="P18138"/>
<dbReference type="Proteomes" id="UP000001169">
    <property type="component" value="Chromosome I"/>
</dbReference>
<dbReference type="GO" id="GO:0022625">
    <property type="term" value="C:cytosolic large ribosomal subunit"/>
    <property type="evidence" value="ECO:0007669"/>
    <property type="project" value="TreeGrafter"/>
</dbReference>
<dbReference type="GO" id="GO:0019843">
    <property type="term" value="F:rRNA binding"/>
    <property type="evidence" value="ECO:0007669"/>
    <property type="project" value="UniProtKB-KW"/>
</dbReference>
<dbReference type="GO" id="GO:0003735">
    <property type="term" value="F:structural constituent of ribosome"/>
    <property type="evidence" value="ECO:0007669"/>
    <property type="project" value="InterPro"/>
</dbReference>
<dbReference type="GO" id="GO:0002181">
    <property type="term" value="P:cytoplasmic translation"/>
    <property type="evidence" value="ECO:0007669"/>
    <property type="project" value="TreeGrafter"/>
</dbReference>
<dbReference type="CDD" id="cd00463">
    <property type="entry name" value="Ribosomal_L31e"/>
    <property type="match status" value="1"/>
</dbReference>
<dbReference type="Gene3D" id="3.10.440.10">
    <property type="match status" value="1"/>
</dbReference>
<dbReference type="HAMAP" id="MF_00410">
    <property type="entry name" value="Ribosomal_eL31"/>
    <property type="match status" value="1"/>
</dbReference>
<dbReference type="InterPro" id="IPR000054">
    <property type="entry name" value="Ribosomal_eL31"/>
</dbReference>
<dbReference type="InterPro" id="IPR020052">
    <property type="entry name" value="Ribosomal_eL31_CS"/>
</dbReference>
<dbReference type="InterPro" id="IPR023621">
    <property type="entry name" value="Ribosomal_eL31_dom_sf"/>
</dbReference>
<dbReference type="NCBIfam" id="NF002258">
    <property type="entry name" value="PRK01192.1-1"/>
    <property type="match status" value="1"/>
</dbReference>
<dbReference type="PANTHER" id="PTHR10956">
    <property type="entry name" value="60S RIBOSOMAL PROTEIN L31"/>
    <property type="match status" value="1"/>
</dbReference>
<dbReference type="PANTHER" id="PTHR10956:SF0">
    <property type="entry name" value="60S RIBOSOMAL PROTEIN L31"/>
    <property type="match status" value="1"/>
</dbReference>
<dbReference type="Pfam" id="PF01198">
    <property type="entry name" value="Ribosomal_L31e"/>
    <property type="match status" value="1"/>
</dbReference>
<dbReference type="SMART" id="SM01380">
    <property type="entry name" value="Ribosomal_L31e"/>
    <property type="match status" value="1"/>
</dbReference>
<dbReference type="SUPFAM" id="SSF54575">
    <property type="entry name" value="Ribosomal protein L31e"/>
    <property type="match status" value="1"/>
</dbReference>
<dbReference type="PROSITE" id="PS01144">
    <property type="entry name" value="RIBOSOMAL_L31E"/>
    <property type="match status" value="1"/>
</dbReference>